<gene>
    <name evidence="7" type="primary">rpl-11.1</name>
    <name evidence="7" type="ORF">CBG01314</name>
</gene>
<dbReference type="EMBL" id="HE601256">
    <property type="protein sequence ID" value="CAP22601.1"/>
    <property type="molecule type" value="Genomic_DNA"/>
</dbReference>
<dbReference type="SMR" id="A8WQ43"/>
<dbReference type="FunCoup" id="A8WQ43">
    <property type="interactions" value="1586"/>
</dbReference>
<dbReference type="STRING" id="6238.A8WQ43"/>
<dbReference type="EnsemblMetazoa" id="CBG01314.1">
    <property type="protein sequence ID" value="CBG01314.1"/>
    <property type="gene ID" value="WBGene00024572"/>
</dbReference>
<dbReference type="KEGG" id="cbr:CBG_01314"/>
<dbReference type="CTD" id="8578068"/>
<dbReference type="WormBase" id="CBG01314">
    <property type="protein sequence ID" value="CBP00334"/>
    <property type="gene ID" value="WBGene00024572"/>
    <property type="gene designation" value="Cbr-rpl-11.1"/>
</dbReference>
<dbReference type="eggNOG" id="KOG0397">
    <property type="taxonomic scope" value="Eukaryota"/>
</dbReference>
<dbReference type="HOGENOM" id="CLU_061015_3_0_1"/>
<dbReference type="InParanoid" id="A8WQ43"/>
<dbReference type="OMA" id="MDFYCIM"/>
<dbReference type="Proteomes" id="UP000008549">
    <property type="component" value="Unassembled WGS sequence"/>
</dbReference>
<dbReference type="GO" id="GO:0022625">
    <property type="term" value="C:cytosolic large ribosomal subunit"/>
    <property type="evidence" value="ECO:0000318"/>
    <property type="project" value="GO_Central"/>
</dbReference>
<dbReference type="GO" id="GO:0005634">
    <property type="term" value="C:nucleus"/>
    <property type="evidence" value="ECO:0007669"/>
    <property type="project" value="UniProtKB-SubCell"/>
</dbReference>
<dbReference type="GO" id="GO:0003723">
    <property type="term" value="F:RNA binding"/>
    <property type="evidence" value="ECO:0000318"/>
    <property type="project" value="GO_Central"/>
</dbReference>
<dbReference type="GO" id="GO:0019843">
    <property type="term" value="F:rRNA binding"/>
    <property type="evidence" value="ECO:0007669"/>
    <property type="project" value="UniProtKB-KW"/>
</dbReference>
<dbReference type="GO" id="GO:0003735">
    <property type="term" value="F:structural constituent of ribosome"/>
    <property type="evidence" value="ECO:0000318"/>
    <property type="project" value="GO_Central"/>
</dbReference>
<dbReference type="GO" id="GO:0006412">
    <property type="term" value="P:translation"/>
    <property type="evidence" value="ECO:0000318"/>
    <property type="project" value="GO_Central"/>
</dbReference>
<dbReference type="FunFam" id="3.30.1440.10:FF:000004">
    <property type="entry name" value="60S ribosomal protein L11, putative"/>
    <property type="match status" value="1"/>
</dbReference>
<dbReference type="Gene3D" id="3.30.1440.10">
    <property type="match status" value="1"/>
</dbReference>
<dbReference type="InterPro" id="IPR002132">
    <property type="entry name" value="Ribosomal_uL5"/>
</dbReference>
<dbReference type="InterPro" id="IPR031309">
    <property type="entry name" value="Ribosomal_uL5_C"/>
</dbReference>
<dbReference type="InterPro" id="IPR020929">
    <property type="entry name" value="Ribosomal_uL5_CS"/>
</dbReference>
<dbReference type="InterPro" id="IPR022803">
    <property type="entry name" value="Ribosomal_uL5_dom_sf"/>
</dbReference>
<dbReference type="InterPro" id="IPR031310">
    <property type="entry name" value="Ribosomal_uL5_N"/>
</dbReference>
<dbReference type="NCBIfam" id="NF003258">
    <property type="entry name" value="PRK04219.1"/>
    <property type="match status" value="1"/>
</dbReference>
<dbReference type="PANTHER" id="PTHR11994">
    <property type="entry name" value="60S RIBOSOMAL PROTEIN L11-RELATED"/>
    <property type="match status" value="1"/>
</dbReference>
<dbReference type="Pfam" id="PF00281">
    <property type="entry name" value="Ribosomal_L5"/>
    <property type="match status" value="1"/>
</dbReference>
<dbReference type="Pfam" id="PF00673">
    <property type="entry name" value="Ribosomal_L5_C"/>
    <property type="match status" value="1"/>
</dbReference>
<dbReference type="PIRSF" id="PIRSF002161">
    <property type="entry name" value="Ribosomal_L5"/>
    <property type="match status" value="1"/>
</dbReference>
<dbReference type="SUPFAM" id="SSF55282">
    <property type="entry name" value="RL5-like"/>
    <property type="match status" value="1"/>
</dbReference>
<dbReference type="PROSITE" id="PS00358">
    <property type="entry name" value="RIBOSOMAL_L5"/>
    <property type="match status" value="1"/>
</dbReference>
<reference evidence="6" key="1">
    <citation type="journal article" date="2003" name="PLoS Biol.">
        <title>The genome sequence of Caenorhabditis briggsae: a platform for comparative genomics.</title>
        <authorList>
            <person name="Stein L.D."/>
            <person name="Bao Z."/>
            <person name="Blasiar D."/>
            <person name="Blumenthal T."/>
            <person name="Brent M.R."/>
            <person name="Chen N."/>
            <person name="Chinwalla A."/>
            <person name="Clarke L."/>
            <person name="Clee C."/>
            <person name="Coghlan A."/>
            <person name="Coulson A."/>
            <person name="D'Eustachio P."/>
            <person name="Fitch D.H.A."/>
            <person name="Fulton L.A."/>
            <person name="Fulton R.E."/>
            <person name="Griffiths-Jones S."/>
            <person name="Harris T.W."/>
            <person name="Hillier L.W."/>
            <person name="Kamath R."/>
            <person name="Kuwabara P.E."/>
            <person name="Mardis E.R."/>
            <person name="Marra M.A."/>
            <person name="Miner T.L."/>
            <person name="Minx P."/>
            <person name="Mullikin J.C."/>
            <person name="Plumb R.W."/>
            <person name="Rogers J."/>
            <person name="Schein J.E."/>
            <person name="Sohrmann M."/>
            <person name="Spieth J."/>
            <person name="Stajich J.E."/>
            <person name="Wei C."/>
            <person name="Willey D."/>
            <person name="Wilson R.K."/>
            <person name="Durbin R.M."/>
            <person name="Waterston R.H."/>
        </authorList>
    </citation>
    <scope>NUCLEOTIDE SEQUENCE [LARGE SCALE GENOMIC DNA]</scope>
    <source>
        <strain evidence="6">AF16</strain>
    </source>
</reference>
<reference evidence="4" key="2">
    <citation type="journal article" date="2005" name="Genetics">
        <title>Autosomal genes of autosomal/X-linked duplicated gene pairs and germ-line proliferation in Caenorhabditis elegans.</title>
        <authorList>
            <person name="Maciejowski J."/>
            <person name="Ahn J.H."/>
            <person name="Cipriani P.G."/>
            <person name="Killian D.J."/>
            <person name="Chaudhary A.L."/>
            <person name="Lee J.I."/>
            <person name="Voutev R."/>
            <person name="Johnsen R.C."/>
            <person name="Baillie D.L."/>
            <person name="Gunsalus K.C."/>
            <person name="Fitch D.H."/>
            <person name="Hubbard E.J."/>
        </authorList>
    </citation>
    <scope>DISRUPTION PHENOTYPE</scope>
</reference>
<keyword id="KW-0963">Cytoplasm</keyword>
<keyword id="KW-0539">Nucleus</keyword>
<keyword id="KW-1185">Reference proteome</keyword>
<keyword id="KW-0687">Ribonucleoprotein</keyword>
<keyword id="KW-0689">Ribosomal protein</keyword>
<keyword id="KW-0694">RNA-binding</keyword>
<keyword id="KW-0699">rRNA-binding</keyword>
<feature type="chain" id="PRO_0000436901" description="Large ribosomal subunit protein uL5A" evidence="4">
    <location>
        <begin position="1"/>
        <end position="196"/>
    </location>
</feature>
<name>RL111_CAEBR</name>
<evidence type="ECO:0000250" key="1">
    <source>
        <dbReference type="UniProtKB" id="P0C0W9"/>
    </source>
</evidence>
<evidence type="ECO:0000255" key="2">
    <source>
        <dbReference type="RuleBase" id="RU003930"/>
    </source>
</evidence>
<evidence type="ECO:0000269" key="3">
    <source>
    </source>
</evidence>
<evidence type="ECO:0000305" key="4"/>
<evidence type="ECO:0000305" key="5">
    <source>
    </source>
</evidence>
<evidence type="ECO:0000312" key="6">
    <source>
        <dbReference type="Proteomes" id="UP000008549"/>
    </source>
</evidence>
<evidence type="ECO:0000312" key="7">
    <source>
        <dbReference type="WormBase" id="CBG01314"/>
    </source>
</evidence>
<organism evidence="6">
    <name type="scientific">Caenorhabditis briggsae</name>
    <dbReference type="NCBI Taxonomy" id="6238"/>
    <lineage>
        <taxon>Eukaryota</taxon>
        <taxon>Metazoa</taxon>
        <taxon>Ecdysozoa</taxon>
        <taxon>Nematoda</taxon>
        <taxon>Chromadorea</taxon>
        <taxon>Rhabditida</taxon>
        <taxon>Rhabditina</taxon>
        <taxon>Rhabditomorpha</taxon>
        <taxon>Rhabditoidea</taxon>
        <taxon>Rhabditidae</taxon>
        <taxon>Peloderinae</taxon>
        <taxon>Caenorhabditis</taxon>
    </lineage>
</organism>
<sequence>MTDIEKQTEIREKKGRNVMRELKIQKLCLNICVGESGDRLTRAAKVLEQLTGQTPVFSKARYTVRTFGIRRNEKIAVHCTVRGPKAEEILEKGLKVKEYELYKENFSDTGNFGFGVQEHIDLGIKYDPGIGIYGMDFYVVLNRNGVRVSKRRRAPGRIGPSHRVDKEETIKWFQQKYDGIILPPKPKTKKNVYRRR</sequence>
<protein>
    <recommendedName>
        <fullName evidence="4">Large ribosomal subunit protein uL5A</fullName>
    </recommendedName>
    <alternativeName>
        <fullName evidence="4">60S ribosomal protein L11-1</fullName>
    </alternativeName>
</protein>
<proteinExistence type="inferred from homology"/>
<accession>A8WQ43</accession>
<comment type="function">
    <text evidence="1">Component of the ribosome, a large ribonucleoprotein complex responsible for the synthesis of proteins in the cell. The small ribosomal subunit (SSU) binds messenger RNAs (mRNAs) and translates the encoded message by selecting cognate aminoacyl-transfer RNA (tRNA) molecules. The large subunit (LSU) contains the ribosomal catalytic site termed the peptidyl transferase center (PTC), which catalyzes the formation of peptide bonds, thereby polymerizing the amino acids delivered by tRNAs into a polypeptide chain. The nascent polypeptides leave the ribosome through a tunnel in the LSU and interact with protein factors that function in enzymatic processing, targeting, and the membrane insertion of nascent chains at the exit of the ribosomal tunnel.</text>
</comment>
<comment type="subunit">
    <text evidence="1">Component of the large ribosomal subunit.</text>
</comment>
<comment type="subcellular location">
    <subcellularLocation>
        <location evidence="1">Nucleus</location>
    </subcellularLocation>
    <subcellularLocation>
        <location evidence="1">Cytoplasm</location>
    </subcellularLocation>
</comment>
<comment type="disruption phenotype">
    <text evidence="3">RNAi-mediated knockdown results in sterility and a germ cell proliferation defect.</text>
</comment>
<comment type="miscellaneous">
    <text evidence="5">There's a functional difference between the two L11-encoding proteins in C.briggsae. rpl-11.1 plays a role in the germline whereas rpl-11.2 has a somatic function.</text>
</comment>
<comment type="similarity">
    <text evidence="2">Belongs to the universal ribosomal protein uL5 family.</text>
</comment>